<protein>
    <recommendedName>
        <fullName evidence="5">DNA double-strand break repair helicase HerA</fullName>
        <ecNumber evidence="3">5.6.2.3</ecNumber>
        <ecNumber evidence="1">5.6.2.4</ecNumber>
    </recommendedName>
    <alternativeName>
        <fullName evidence="5">Bidirectional DNA 3'-5' and 5'-3' helicase HerA</fullName>
    </alternativeName>
</protein>
<organism>
    <name type="scientific">Pyrococcus furiosus (strain ATCC 43587 / DSM 3638 / JCM 8422 / Vc1)</name>
    <dbReference type="NCBI Taxonomy" id="186497"/>
    <lineage>
        <taxon>Archaea</taxon>
        <taxon>Methanobacteriati</taxon>
        <taxon>Methanobacteriota</taxon>
        <taxon>Thermococci</taxon>
        <taxon>Thermococcales</taxon>
        <taxon>Thermococcaceae</taxon>
        <taxon>Pyrococcus</taxon>
    </lineage>
</organism>
<keyword id="KW-0067">ATP-binding</keyword>
<keyword id="KW-0227">DNA damage</keyword>
<keyword id="KW-0234">DNA repair</keyword>
<keyword id="KW-0238">DNA-binding</keyword>
<keyword id="KW-0347">Helicase</keyword>
<keyword id="KW-0378">Hydrolase</keyword>
<keyword id="KW-0413">Isomerase</keyword>
<keyword id="KW-0547">Nucleotide-binding</keyword>
<keyword id="KW-1185">Reference proteome</keyword>
<comment type="function">
    <text evidence="1 3">Involved in DNA double-strand break (DSB) repair (PubMed:18957200). Probably acts with NurA to stimulate resection of the 5' strand and produce the long 3' single-strand that is required for RadA loading (PubMed:18957200). Has DNA-dependent ATPase activity and DNA helicase activity (By similarity) (PubMed:18957200).</text>
</comment>
<comment type="catalytic activity">
    <reaction evidence="3">
        <text>Couples ATP hydrolysis with the unwinding of duplex DNA at the replication fork by translocating in the 5'-3' direction. This creates two antiparallel DNA single strands (ssDNA). The leading ssDNA polymer is the template for DNA polymerase III holoenzyme which synthesizes a continuous strand.</text>
        <dbReference type="EC" id="5.6.2.3"/>
    </reaction>
</comment>
<comment type="catalytic activity">
    <reaction evidence="3">
        <text>ATP + H2O = ADP + phosphate + H(+)</text>
        <dbReference type="Rhea" id="RHEA:13065"/>
        <dbReference type="ChEBI" id="CHEBI:15377"/>
        <dbReference type="ChEBI" id="CHEBI:15378"/>
        <dbReference type="ChEBI" id="CHEBI:30616"/>
        <dbReference type="ChEBI" id="CHEBI:43474"/>
        <dbReference type="ChEBI" id="CHEBI:456216"/>
        <dbReference type="EC" id="5.6.2.3"/>
    </reaction>
</comment>
<comment type="catalytic activity">
    <reaction evidence="1">
        <text>Couples ATP hydrolysis with the unwinding of duplex DNA by translocating in the 3'-5' direction.</text>
        <dbReference type="EC" id="5.6.2.4"/>
    </reaction>
</comment>
<comment type="catalytic activity">
    <reaction evidence="1">
        <text>ATP + H2O = ADP + phosphate + H(+)</text>
        <dbReference type="Rhea" id="RHEA:13065"/>
        <dbReference type="ChEBI" id="CHEBI:15377"/>
        <dbReference type="ChEBI" id="CHEBI:15378"/>
        <dbReference type="ChEBI" id="CHEBI:30616"/>
        <dbReference type="ChEBI" id="CHEBI:43474"/>
        <dbReference type="ChEBI" id="CHEBI:456216"/>
        <dbReference type="EC" id="5.6.2.4"/>
    </reaction>
</comment>
<comment type="activity regulation">
    <text evidence="3">Helicase activity is stimulated in the presence of NurA.</text>
</comment>
<comment type="subunit">
    <text evidence="3">Homohexamer (PubMed:18957200). Interacts with NurA (PubMed:18957200).</text>
</comment>
<comment type="similarity">
    <text evidence="5">Belongs to the HerA family.</text>
</comment>
<proteinExistence type="evidence at protein level"/>
<sequence length="551" mass="61823">MEEFVGIVRGEASFTSYEFSINPSANVSFGEFVVTKNRDGDLVLGTVRHVKNVNWLLSSVKSNFNSLALDIEEYGESLGENEEVVATVRILGKIEGNELVPNRVPIRNGEYVYKASDDLLQMIYGNDGIEIGTLLLRPNVRIKLDVNELVSRHFAVLAVTGAGKSNAVAVIIKGIVEDVGGTVVVLDPHGDYVNLRLPETGIDLVNIIDGKIRIEDLDPEELADLIGISSSAQIQRHFLSLAWETVKHKNQSLGGESLLEALLDLLNEWISRKTIKYWSEKEGRMKSEDLKSERIETIRGIIFRIRRFLRNYGNIVTSENLVAAIKPGMVNVIDLSPLDENQMKVVVGKFLEAVFEKRVEYEMARKRFEKETSKKKRDEYEEIMTEIESKYPALAYPILVIVEEAHIFAPQGEENDAMRIMGRIAREGRKFGVGLGVVSQRPSKLNEDILSQMNTKIILRIVNPRDQDYVLKASEQLSKDLMDDIAGLGKGEAVIVGQAIKLPALVRIYNFKELRGKAGTGQYGGEDIGILDRWNKMKRNMVNSLDIDIDF</sequence>
<dbReference type="EC" id="5.6.2.3" evidence="3"/>
<dbReference type="EC" id="5.6.2.4" evidence="1"/>
<dbReference type="EMBL" id="AE009950">
    <property type="protein sequence ID" value="AAL81289.1"/>
    <property type="molecule type" value="Genomic_DNA"/>
</dbReference>
<dbReference type="RefSeq" id="WP_011012305.1">
    <property type="nucleotide sequence ID" value="NZ_CP023154.1"/>
</dbReference>
<dbReference type="SMR" id="Q8U1P0"/>
<dbReference type="STRING" id="186497.PF1165"/>
<dbReference type="PaxDb" id="186497-PF1165"/>
<dbReference type="GeneID" id="41712973"/>
<dbReference type="KEGG" id="pfu:PF1165"/>
<dbReference type="PATRIC" id="fig|186497.12.peg.1225"/>
<dbReference type="eggNOG" id="arCOG00280">
    <property type="taxonomic scope" value="Archaea"/>
</dbReference>
<dbReference type="HOGENOM" id="CLU_023842_2_0_2"/>
<dbReference type="OrthoDB" id="107033at2157"/>
<dbReference type="PhylomeDB" id="Q8U1P0"/>
<dbReference type="Proteomes" id="UP000001013">
    <property type="component" value="Chromosome"/>
</dbReference>
<dbReference type="GO" id="GO:0005524">
    <property type="term" value="F:ATP binding"/>
    <property type="evidence" value="ECO:0007669"/>
    <property type="project" value="UniProtKB-KW"/>
</dbReference>
<dbReference type="GO" id="GO:0016887">
    <property type="term" value="F:ATP hydrolysis activity"/>
    <property type="evidence" value="ECO:0007669"/>
    <property type="project" value="RHEA"/>
</dbReference>
<dbReference type="GO" id="GO:0004386">
    <property type="term" value="F:helicase activity"/>
    <property type="evidence" value="ECO:0007669"/>
    <property type="project" value="UniProtKB-KW"/>
</dbReference>
<dbReference type="GO" id="GO:0006281">
    <property type="term" value="P:DNA repair"/>
    <property type="evidence" value="ECO:0007669"/>
    <property type="project" value="UniProtKB-KW"/>
</dbReference>
<dbReference type="Gene3D" id="3.40.50.300">
    <property type="entry name" value="P-loop containing nucleotide triphosphate hydrolases"/>
    <property type="match status" value="2"/>
</dbReference>
<dbReference type="InterPro" id="IPR053659">
    <property type="entry name" value="DSB_Repair_Helicase_HerA"/>
</dbReference>
<dbReference type="InterPro" id="IPR008571">
    <property type="entry name" value="HerA-like"/>
</dbReference>
<dbReference type="InterPro" id="IPR018538">
    <property type="entry name" value="HerA_barrel_dom"/>
</dbReference>
<dbReference type="InterPro" id="IPR033186">
    <property type="entry name" value="HerA_C"/>
</dbReference>
<dbReference type="InterPro" id="IPR002789">
    <property type="entry name" value="HerA_central"/>
</dbReference>
<dbReference type="InterPro" id="IPR027417">
    <property type="entry name" value="P-loop_NTPase"/>
</dbReference>
<dbReference type="NCBIfam" id="NF040819">
    <property type="entry name" value="helicase_HerA"/>
    <property type="match status" value="1"/>
</dbReference>
<dbReference type="PANTHER" id="PTHR42957">
    <property type="entry name" value="HELICASE MJ1565-RELATED"/>
    <property type="match status" value="1"/>
</dbReference>
<dbReference type="PANTHER" id="PTHR42957:SF1">
    <property type="entry name" value="HELICASE MJ1565-RELATED"/>
    <property type="match status" value="1"/>
</dbReference>
<dbReference type="Pfam" id="PF01935">
    <property type="entry name" value="DUF87"/>
    <property type="match status" value="1"/>
</dbReference>
<dbReference type="Pfam" id="PF09378">
    <property type="entry name" value="HAS-barrel"/>
    <property type="match status" value="1"/>
</dbReference>
<dbReference type="Pfam" id="PF05872">
    <property type="entry name" value="HerA_C"/>
    <property type="match status" value="1"/>
</dbReference>
<dbReference type="SUPFAM" id="SSF52540">
    <property type="entry name" value="P-loop containing nucleoside triphosphate hydrolases"/>
    <property type="match status" value="1"/>
</dbReference>
<name>HERA_PYRFU</name>
<feature type="chain" id="PRO_0000434023" description="DNA double-strand break repair helicase HerA">
    <location>
        <begin position="1"/>
        <end position="551"/>
    </location>
</feature>
<feature type="binding site" evidence="2">
    <location>
        <position position="152"/>
    </location>
    <ligand>
        <name>ATP</name>
        <dbReference type="ChEBI" id="CHEBI:30616"/>
    </ligand>
</feature>
<feature type="binding site" evidence="2">
    <location>
        <begin position="161"/>
        <end position="166"/>
    </location>
    <ligand>
        <name>ATP</name>
        <dbReference type="ChEBI" id="CHEBI:30616"/>
    </ligand>
</feature>
<feature type="binding site" evidence="2">
    <location>
        <begin position="507"/>
        <end position="508"/>
    </location>
    <ligand>
        <name>ATP</name>
        <dbReference type="ChEBI" id="CHEBI:30616"/>
    </ligand>
</feature>
<accession>Q8U1P0</accession>
<reference key="1">
    <citation type="journal article" date="1999" name="Genetics">
        <title>Divergence of the hyperthermophilic archaea Pyrococcus furiosus and P. horikoshii inferred from complete genomic sequences.</title>
        <authorList>
            <person name="Maeder D.L."/>
            <person name="Weiss R.B."/>
            <person name="Dunn D.M."/>
            <person name="Cherry J.L."/>
            <person name="Gonzalez J.M."/>
            <person name="DiRuggiero J."/>
            <person name="Robb F.T."/>
        </authorList>
    </citation>
    <scope>NUCLEOTIDE SEQUENCE [LARGE SCALE GENOMIC DNA]</scope>
    <source>
        <strain>ATCC 43587 / DSM 3638 / JCM 8422 / Vc1</strain>
    </source>
</reference>
<reference key="2">
    <citation type="journal article" date="2008" name="Cell">
        <title>The P. furiosus mre11/rad50 complex promotes 5' strand resection at a DNA double-strand break.</title>
        <authorList>
            <person name="Hopkins B.B."/>
            <person name="Paull T.T."/>
        </authorList>
    </citation>
    <scope>FUNCTION</scope>
    <scope>ACTIVITY REGULATION</scope>
    <scope>SUBUNIT</scope>
    <scope>INTERACTION WITH NURA</scope>
    <source>
        <strain>ATCC 43587 / DSM 3638 / JCM 8422 / Vc1</strain>
    </source>
</reference>
<evidence type="ECO:0000250" key="1">
    <source>
        <dbReference type="UniProtKB" id="F2Z5Z6"/>
    </source>
</evidence>
<evidence type="ECO:0000250" key="2">
    <source>
        <dbReference type="UniProtKB" id="Q97WG8"/>
    </source>
</evidence>
<evidence type="ECO:0000269" key="3">
    <source>
    </source>
</evidence>
<evidence type="ECO:0000303" key="4">
    <source>
    </source>
</evidence>
<evidence type="ECO:0000305" key="5"/>
<evidence type="ECO:0000312" key="6">
    <source>
        <dbReference type="EMBL" id="AAL81289.1"/>
    </source>
</evidence>
<gene>
    <name evidence="4" type="primary">herA</name>
    <name evidence="6" type="ordered locus">PF1165</name>
</gene>